<evidence type="ECO:0000255" key="1">
    <source>
        <dbReference type="HAMAP-Rule" id="MF_01270"/>
    </source>
</evidence>
<comment type="function">
    <text evidence="1">Catalyzes the specific phosphorylation of 1,6-anhydro-N-acetylmuramic acid (anhMurNAc) with the simultaneous cleavage of the 1,6-anhydro ring, generating MurNAc-6-P. Is required for the utilization of anhMurNAc either imported from the medium or derived from its own cell wall murein, and thus plays a role in cell wall recycling.</text>
</comment>
<comment type="catalytic activity">
    <reaction evidence="1">
        <text>1,6-anhydro-N-acetyl-beta-muramate + ATP + H2O = N-acetyl-D-muramate 6-phosphate + ADP + H(+)</text>
        <dbReference type="Rhea" id="RHEA:24952"/>
        <dbReference type="ChEBI" id="CHEBI:15377"/>
        <dbReference type="ChEBI" id="CHEBI:15378"/>
        <dbReference type="ChEBI" id="CHEBI:30616"/>
        <dbReference type="ChEBI" id="CHEBI:58690"/>
        <dbReference type="ChEBI" id="CHEBI:58722"/>
        <dbReference type="ChEBI" id="CHEBI:456216"/>
        <dbReference type="EC" id="2.7.1.170"/>
    </reaction>
</comment>
<comment type="pathway">
    <text evidence="1">Amino-sugar metabolism; 1,6-anhydro-N-acetylmuramate degradation.</text>
</comment>
<comment type="pathway">
    <text evidence="1">Cell wall biogenesis; peptidoglycan recycling.</text>
</comment>
<comment type="similarity">
    <text evidence="1">Belongs to the anhydro-N-acetylmuramic acid kinase family.</text>
</comment>
<keyword id="KW-0067">ATP-binding</keyword>
<keyword id="KW-0119">Carbohydrate metabolism</keyword>
<keyword id="KW-0418">Kinase</keyword>
<keyword id="KW-0547">Nucleotide-binding</keyword>
<keyword id="KW-0808">Transferase</keyword>
<reference key="1">
    <citation type="journal article" date="2000" name="Science">
        <title>Bacterial rhodopsin: evidence for a new type of phototrophy in the sea.</title>
        <authorList>
            <person name="Beja O."/>
            <person name="Aravind L."/>
            <person name="Koonin E.V."/>
            <person name="Suzuki M.T."/>
            <person name="Hadd A."/>
            <person name="Nguyen L.P."/>
            <person name="Jovanovich S.B."/>
            <person name="Gates C.M."/>
            <person name="Feldman R.A."/>
            <person name="Spudich J.L."/>
            <person name="Spudich E.N."/>
            <person name="DeLong E.F."/>
        </authorList>
    </citation>
    <scope>NUCLEOTIDE SEQUENCE [GENOMIC DNA]</scope>
</reference>
<protein>
    <recommendedName>
        <fullName evidence="1">Anhydro-N-acetylmuramic acid kinase</fullName>
        <ecNumber evidence="1">2.7.1.170</ecNumber>
    </recommendedName>
    <alternativeName>
        <fullName evidence="1">AnhMurNAc kinase</fullName>
    </alternativeName>
</protein>
<accession>Q9F7Q9</accession>
<sequence length="364" mass="40285">MSKKIYIGAMTGTSHDAIDISFLSIGTKIHLEYFHSIKFPKSLRLKVKKLIENNESSLSDLGTINKEIGFLFSKSINEAIGFSKIKKSSIECVAISGQTIRHEINKRFPFSMQIGDPNIVAKETGLLVVSDFRNMHIALGGEGAPLVPEFHNQLFYKARNPRIILNIGGISNYSFVKNRNDIWGTDVGPGNAILDAYCSDFLQIPFDKNGAIAAKGKVDHIELGRLLQNNFFKRKCPKSTGKELFNIKILSKKFLKKKAEDILCTLVEFSAKSIINSIHKNGHNNCDIVICGGGAHNKYLVKRISEMASNDIVLSSDLGHDVFAIESMAFAWMGYKRVSNEALIVQTSSKNVKGLLGSITKSKL</sequence>
<proteinExistence type="inferred from homology"/>
<dbReference type="EC" id="2.7.1.170" evidence="1"/>
<dbReference type="EMBL" id="AF279106">
    <property type="protein sequence ID" value="AAG10460.1"/>
    <property type="molecule type" value="Genomic_DNA"/>
</dbReference>
<dbReference type="SMR" id="Q9F7Q9"/>
<dbReference type="UniPathway" id="UPA00343"/>
<dbReference type="UniPathway" id="UPA00544"/>
<dbReference type="GO" id="GO:0005524">
    <property type="term" value="F:ATP binding"/>
    <property type="evidence" value="ECO:0007669"/>
    <property type="project" value="UniProtKB-UniRule"/>
</dbReference>
<dbReference type="GO" id="GO:0016301">
    <property type="term" value="F:kinase activity"/>
    <property type="evidence" value="ECO:0007669"/>
    <property type="project" value="UniProtKB-KW"/>
</dbReference>
<dbReference type="GO" id="GO:0016773">
    <property type="term" value="F:phosphotransferase activity, alcohol group as acceptor"/>
    <property type="evidence" value="ECO:0007669"/>
    <property type="project" value="UniProtKB-UniRule"/>
</dbReference>
<dbReference type="GO" id="GO:0097175">
    <property type="term" value="P:1,6-anhydro-N-acetyl-beta-muramic acid catabolic process"/>
    <property type="evidence" value="ECO:0007669"/>
    <property type="project" value="UniProtKB-UniRule"/>
</dbReference>
<dbReference type="GO" id="GO:0006040">
    <property type="term" value="P:amino sugar metabolic process"/>
    <property type="evidence" value="ECO:0007669"/>
    <property type="project" value="InterPro"/>
</dbReference>
<dbReference type="GO" id="GO:0009254">
    <property type="term" value="P:peptidoglycan turnover"/>
    <property type="evidence" value="ECO:0007669"/>
    <property type="project" value="UniProtKB-UniRule"/>
</dbReference>
<dbReference type="CDD" id="cd24050">
    <property type="entry name" value="ASKHA_NBD_ANMK"/>
    <property type="match status" value="1"/>
</dbReference>
<dbReference type="Gene3D" id="3.30.420.40">
    <property type="match status" value="2"/>
</dbReference>
<dbReference type="HAMAP" id="MF_01270">
    <property type="entry name" value="AnhMurNAc_kinase"/>
    <property type="match status" value="1"/>
</dbReference>
<dbReference type="InterPro" id="IPR005338">
    <property type="entry name" value="Anhydro_N_Ac-Mur_kinase"/>
</dbReference>
<dbReference type="InterPro" id="IPR043129">
    <property type="entry name" value="ATPase_NBD"/>
</dbReference>
<dbReference type="PANTHER" id="PTHR30605">
    <property type="entry name" value="ANHYDRO-N-ACETYLMURAMIC ACID KINASE"/>
    <property type="match status" value="1"/>
</dbReference>
<dbReference type="PANTHER" id="PTHR30605:SF0">
    <property type="entry name" value="ANHYDRO-N-ACETYLMURAMIC ACID KINASE"/>
    <property type="match status" value="1"/>
</dbReference>
<dbReference type="Pfam" id="PF03702">
    <property type="entry name" value="AnmK"/>
    <property type="match status" value="1"/>
</dbReference>
<dbReference type="SUPFAM" id="SSF53067">
    <property type="entry name" value="Actin-like ATPase domain"/>
    <property type="match status" value="1"/>
</dbReference>
<organism>
    <name type="scientific">Gamma-proteobacterium EBAC31A08</name>
    <dbReference type="NCBI Taxonomy" id="133804"/>
    <lineage>
        <taxon>Bacteria</taxon>
        <taxon>Pseudomonadati</taxon>
        <taxon>Pseudomonadota</taxon>
        <taxon>Gammaproteobacteria</taxon>
        <taxon>environmental samples</taxon>
    </lineage>
</organism>
<feature type="chain" id="PRO_0000250001" description="Anhydro-N-acetylmuramic acid kinase">
    <location>
        <begin position="1"/>
        <end position="364"/>
    </location>
</feature>
<feature type="binding site" evidence="1">
    <location>
        <begin position="12"/>
        <end position="19"/>
    </location>
    <ligand>
        <name>ATP</name>
        <dbReference type="ChEBI" id="CHEBI:30616"/>
    </ligand>
</feature>
<gene>
    <name evidence="1" type="primary">anmK</name>
</gene>
<name>ANMK_PRB01</name>